<gene>
    <name type="primary">Edrf1</name>
</gene>
<name>EDRF1_MOUSE</name>
<organism>
    <name type="scientific">Mus musculus</name>
    <name type="common">Mouse</name>
    <dbReference type="NCBI Taxonomy" id="10090"/>
    <lineage>
        <taxon>Eukaryota</taxon>
        <taxon>Metazoa</taxon>
        <taxon>Chordata</taxon>
        <taxon>Craniata</taxon>
        <taxon>Vertebrata</taxon>
        <taxon>Euteleostomi</taxon>
        <taxon>Mammalia</taxon>
        <taxon>Eutheria</taxon>
        <taxon>Euarchontoglires</taxon>
        <taxon>Glires</taxon>
        <taxon>Rodentia</taxon>
        <taxon>Myomorpha</taxon>
        <taxon>Muroidea</taxon>
        <taxon>Muridae</taxon>
        <taxon>Murinae</taxon>
        <taxon>Mus</taxon>
        <taxon>Mus</taxon>
    </lineage>
</organism>
<keyword id="KW-0010">Activator</keyword>
<keyword id="KW-0539">Nucleus</keyword>
<keyword id="KW-1185">Reference proteome</keyword>
<keyword id="KW-0677">Repeat</keyword>
<keyword id="KW-0802">TPR repeat</keyword>
<keyword id="KW-0804">Transcription</keyword>
<keyword id="KW-0805">Transcription regulation</keyword>
<reference key="1">
    <citation type="journal article" date="2004" name="Genome Res.">
        <title>The status, quality, and expansion of the NIH full-length cDNA project: the Mammalian Gene Collection (MGC).</title>
        <authorList>
            <consortium name="The MGC Project Team"/>
        </authorList>
    </citation>
    <scope>NUCLEOTIDE SEQUENCE [LARGE SCALE MRNA]</scope>
    <source>
        <strain>C57BL/6J</strain>
        <strain>FVB/N</strain>
        <tissue>Fetal brain</tissue>
        <tissue>Mammary tumor</tissue>
    </source>
</reference>
<reference key="2">
    <citation type="journal article" date="2010" name="Cell">
        <title>A tissue-specific atlas of mouse protein phosphorylation and expression.</title>
        <authorList>
            <person name="Huttlin E.L."/>
            <person name="Jedrychowski M.P."/>
            <person name="Elias J.E."/>
            <person name="Goswami T."/>
            <person name="Rad R."/>
            <person name="Beausoleil S.A."/>
            <person name="Villen J."/>
            <person name="Haas W."/>
            <person name="Sowa M.E."/>
            <person name="Gygi S.P."/>
        </authorList>
    </citation>
    <scope>IDENTIFICATION BY MASS SPECTROMETRY [LARGE SCALE ANALYSIS]</scope>
    <source>
        <tissue>Kidney</tissue>
        <tissue>Lung</tissue>
        <tissue>Spleen</tissue>
        <tissue>Testis</tissue>
    </source>
</reference>
<proteinExistence type="evidence at protein level"/>
<sequence length="1239" mass="138834">MGDPKEAGAEASPSGAAARGGLSLLSQADSEEPSAQGSALFLGGNEVKSRAVVKYSSAPPRTAFARLEEKTDLKLPPANWLRESAKLGPAGTTILGNSKKSKPFSSFGMAYDFIDSVGNDVDVVSDSENIKKLLKIPYSKSHVSMAVHRIGRTLLLDELDIQELFMRSSQTGDWTWLKEFYQRLIDQKWQRKKKSKEHWYQKAILSKFLYYSINGDGAAQPVPSPAEQEESSSSQQTHESEGAAWPAPFEMPSSVSEDPSASSQGREPLEPSCIVGHVASAPKEQNLTTLFNDGENSQGLKNDFVRNILWTFEDIHMLVGSNMPIFGGGRYPAVSLRLRDNNKPINVLTGIDYWLDNLICNVPELVMCFHVNGIVQKYEMIKTEEIPNLENSNFSTKVIKDIAQNILSFLKSNCTKEGHTYWLFKASGSDIVKLYDLTTLCEETEDKYQNPFTMPVAILLYKVACNMMMKKNQNKKHYGTIRTLLLNCVKLLDKSRHPQIIASANYMLSELFQLDEPKKEESSDSPLNENSDESYSEEEEEMADSDENGSYSTSSDPADDNKAVAIIKSVGELSVPEKYKSIHQIRPSCAFPVCHDTEERCRLVLSYVLEGLKSVDSSIKKESDLPAADPSTPIPLKYEDESTRGGPEGLEKQMALFLDKMGSIQKGSCSGQSGMTPGSWQHKMKLQLILKSSKAYYILSDAAMSLQKYGRALRYIKLALQSHDTYCCLCTNMLSEVLLFLSQYLTLCGDIQLMLAQNANNRAAHLEEFNYQTKEDQEILHSLHRESSCQGFAWATDLSTDLESQLSVSCKCYEAANEILQFSDLKSQNPEHYVQVLKRMGNIRNEIGVFYMNQAAALQGERVVSKSVSAAEQQLWKKSFSCFEKGIHNFESIDDATNAALLLCNTGRLMRVCAQAHCGAEDEFKREFSPEEGLYYSKAVDYYLKALRSLGTRDMHPIVWDSVNWELSTTYFTMATLQQDYAPLSRKAQEQIEKEVSEAMMKSLKHCDVDSATARQPLCQYRAATIHHRLASMYHSCLRNQVGDEHLRKQHRVLADLHYSKAAKLFQLLKDAPCELLRVQLERVAFAEFQMSSQNSNVGKLKTLSGALDIMVRTEHAFQLIRKELVEECDQPKNDEATPAADSSPNLNREEVIKLLSIFESRLSFLLLQSIKLMSSSKRKMSSNAEEDIVLQTNKQIYSQLLRATANRNSTLLERIEVVICLLEQLASGSSRSSGSAVP</sequence>
<accession>Q6GQV7</accession>
<accession>Q80ZY3</accession>
<accession>Q8R3P5</accession>
<dbReference type="EMBL" id="BC024916">
    <property type="protein sequence ID" value="AAH24916.1"/>
    <property type="status" value="ALT_INIT"/>
    <property type="molecule type" value="mRNA"/>
</dbReference>
<dbReference type="EMBL" id="BC046235">
    <property type="protein sequence ID" value="AAH46235.1"/>
    <property type="status" value="ALT_INIT"/>
    <property type="molecule type" value="mRNA"/>
</dbReference>
<dbReference type="EMBL" id="BC072596">
    <property type="protein sequence ID" value="AAH72596.1"/>
    <property type="molecule type" value="mRNA"/>
</dbReference>
<dbReference type="RefSeq" id="NP_835216.3">
    <property type="nucleotide sequence ID" value="NM_178115.4"/>
</dbReference>
<dbReference type="BioGRID" id="229562">
    <property type="interactions" value="2"/>
</dbReference>
<dbReference type="FunCoup" id="Q6GQV7">
    <property type="interactions" value="436"/>
</dbReference>
<dbReference type="STRING" id="10090.ENSMUSP00000059166"/>
<dbReference type="GlyGen" id="Q6GQV7">
    <property type="glycosylation" value="1 site"/>
</dbReference>
<dbReference type="iPTMnet" id="Q6GQV7"/>
<dbReference type="PhosphoSitePlus" id="Q6GQV7"/>
<dbReference type="jPOST" id="Q6GQV7"/>
<dbReference type="PaxDb" id="10090-ENSMUSP00000059166"/>
<dbReference type="ProteomicsDB" id="277684"/>
<dbReference type="Pumba" id="Q6GQV7"/>
<dbReference type="GeneID" id="214764"/>
<dbReference type="KEGG" id="mmu:214764"/>
<dbReference type="AGR" id="MGI:1919831"/>
<dbReference type="CTD" id="26098"/>
<dbReference type="MGI" id="MGI:1919831">
    <property type="gene designation" value="Edrf1"/>
</dbReference>
<dbReference type="eggNOG" id="ENOG502QTNC">
    <property type="taxonomic scope" value="Eukaryota"/>
</dbReference>
<dbReference type="InParanoid" id="Q6GQV7"/>
<dbReference type="OMA" id="AFLYCNM"/>
<dbReference type="OrthoDB" id="419432at2759"/>
<dbReference type="PhylomeDB" id="Q6GQV7"/>
<dbReference type="BioGRID-ORCS" id="214764">
    <property type="hits" value="11 hits in 78 CRISPR screens"/>
</dbReference>
<dbReference type="ChiTaRS" id="Edrf1">
    <property type="organism name" value="mouse"/>
</dbReference>
<dbReference type="PRO" id="PR:Q6GQV7"/>
<dbReference type="Proteomes" id="UP000000589">
    <property type="component" value="Unplaced"/>
</dbReference>
<dbReference type="RNAct" id="Q6GQV7">
    <property type="molecule type" value="protein"/>
</dbReference>
<dbReference type="GO" id="GO:0005634">
    <property type="term" value="C:nucleus"/>
    <property type="evidence" value="ECO:0007669"/>
    <property type="project" value="UniProtKB-SubCell"/>
</dbReference>
<dbReference type="InterPro" id="IPR056582">
    <property type="entry name" value="EDRF1_N"/>
</dbReference>
<dbReference type="InterPro" id="IPR056583">
    <property type="entry name" value="EDRF1_TPR"/>
</dbReference>
<dbReference type="PANTHER" id="PTHR15000">
    <property type="entry name" value="ERYTHROID DIFFERENTIATION-RELATED FACTOR 1"/>
    <property type="match status" value="1"/>
</dbReference>
<dbReference type="PANTHER" id="PTHR15000:SF1">
    <property type="entry name" value="ERYTHROID DIFFERENTIATION-RELATED FACTOR 1"/>
    <property type="match status" value="1"/>
</dbReference>
<dbReference type="Pfam" id="PF23788">
    <property type="entry name" value="EDRF1_N"/>
    <property type="match status" value="1"/>
</dbReference>
<dbReference type="Pfam" id="PF23723">
    <property type="entry name" value="TPR_EDRF1"/>
    <property type="match status" value="1"/>
</dbReference>
<comment type="function">
    <text evidence="1">Transcription factor involved in erythroid differentiation. Involved in transcriptional activation of the globin gene (By similarity).</text>
</comment>
<comment type="subcellular location">
    <subcellularLocation>
        <location evidence="3">Nucleus</location>
    </subcellularLocation>
</comment>
<comment type="sequence caution" evidence="3">
    <conflict type="erroneous initiation">
        <sequence resource="EMBL-CDS" id="AAH24916"/>
    </conflict>
</comment>
<comment type="sequence caution" evidence="3">
    <conflict type="erroneous initiation">
        <sequence resource="EMBL-CDS" id="AAH46235"/>
    </conflict>
</comment>
<evidence type="ECO:0000250" key="1"/>
<evidence type="ECO:0000256" key="2">
    <source>
        <dbReference type="SAM" id="MobiDB-lite"/>
    </source>
</evidence>
<evidence type="ECO:0000305" key="3"/>
<feature type="chain" id="PRO_0000244261" description="Erythroid differentiation-related factor 1">
    <location>
        <begin position="1"/>
        <end position="1239"/>
    </location>
</feature>
<feature type="repeat" description="TPR 1">
    <location>
        <begin position="693"/>
        <end position="726"/>
    </location>
</feature>
<feature type="repeat" description="TPR 2">
    <location>
        <begin position="914"/>
        <end position="953"/>
    </location>
</feature>
<feature type="region of interest" description="Disordered" evidence="2">
    <location>
        <begin position="1"/>
        <end position="39"/>
    </location>
</feature>
<feature type="region of interest" description="Disordered" evidence="2">
    <location>
        <begin position="219"/>
        <end position="269"/>
    </location>
</feature>
<feature type="region of interest" description="Disordered" evidence="2">
    <location>
        <begin position="517"/>
        <end position="559"/>
    </location>
</feature>
<feature type="region of interest" description="Disordered" evidence="2">
    <location>
        <begin position="620"/>
        <end position="646"/>
    </location>
</feature>
<feature type="compositionally biased region" description="Low complexity" evidence="2">
    <location>
        <begin position="9"/>
        <end position="28"/>
    </location>
</feature>
<feature type="compositionally biased region" description="Low complexity" evidence="2">
    <location>
        <begin position="253"/>
        <end position="263"/>
    </location>
</feature>
<feature type="compositionally biased region" description="Acidic residues" evidence="2">
    <location>
        <begin position="530"/>
        <end position="547"/>
    </location>
</feature>
<protein>
    <recommendedName>
        <fullName>Erythroid differentiation-related factor 1</fullName>
    </recommendedName>
</protein>